<evidence type="ECO:0000255" key="1">
    <source>
        <dbReference type="HAMAP-Rule" id="MF_03111"/>
    </source>
</evidence>
<accession>Q7RCL6</accession>
<comment type="function">
    <text evidence="1">Lyase that catalyzes the C1-decarboxylation of 4-hydroxy-3-methoxy-5-(all-trans-polyprenyl)benzoic acid into 2-methoxy-6-(all-trans-polyprenyl)phenol during ubiquinone biosynthesis.</text>
</comment>
<comment type="catalytic activity">
    <reaction evidence="1">
        <text>a 4-hydroxy-3-methoxy-5-(all-trans-polyprenyl)benzoate + H(+) = a 2-methoxy-6-(all-trans-polyprenyl)phenol + CO2</text>
        <dbReference type="Rhea" id="RHEA:81179"/>
        <dbReference type="Rhea" id="RHEA-COMP:9551"/>
        <dbReference type="Rhea" id="RHEA-COMP:10931"/>
        <dbReference type="ChEBI" id="CHEBI:15378"/>
        <dbReference type="ChEBI" id="CHEBI:16526"/>
        <dbReference type="ChEBI" id="CHEBI:62731"/>
        <dbReference type="ChEBI" id="CHEBI:84443"/>
        <dbReference type="EC" id="4.1.1.130"/>
    </reaction>
</comment>
<comment type="cofactor">
    <cofactor evidence="1">
        <name>Zn(2+)</name>
        <dbReference type="ChEBI" id="CHEBI:29105"/>
    </cofactor>
</comment>
<comment type="pathway">
    <text evidence="1">Cofactor biosynthesis; ubiquinone biosynthesis.</text>
</comment>
<comment type="subunit">
    <text evidence="1">Component of a multi-subunit COQ enzyme complex.</text>
</comment>
<comment type="subcellular location">
    <subcellularLocation>
        <location evidence="1">Mitochondrion inner membrane</location>
        <topology evidence="1">Peripheral membrane protein</topology>
        <orientation evidence="1">Matrix side</orientation>
    </subcellularLocation>
</comment>
<comment type="miscellaneous">
    <text evidence="1">This protein may be expected to contain an N-terminal transit peptide but none has been predicted.</text>
</comment>
<comment type="similarity">
    <text evidence="1">Belongs to the COQ4 family.</text>
</comment>
<name>COQ4_PLAYO</name>
<keyword id="KW-0456">Lyase</keyword>
<keyword id="KW-0472">Membrane</keyword>
<keyword id="KW-0479">Metal-binding</keyword>
<keyword id="KW-0496">Mitochondrion</keyword>
<keyword id="KW-0999">Mitochondrion inner membrane</keyword>
<keyword id="KW-1185">Reference proteome</keyword>
<keyword id="KW-0831">Ubiquinone biosynthesis</keyword>
<keyword id="KW-0862">Zinc</keyword>
<sequence length="355" mass="42539">MSNFAKIFQSNWIDLNKLGKLEIFLKTILGIYKAPNRTHLLAHAADISSFYAVKNIYEYMKNDDEGKEILKNKPLLIRQDIQFNELKKLPKNTLGYKYMEFLETYKLHAHDREVAHFFDNINYSYILTRYRQIHDIGHVVYNLNISIESEAALKMIELIHTKLPITLLAILVAPFMSPLYRFQYIFKDKIPPNFLNPNFDYTYXDDYNYIDELSLKQYVYNLTEYFHIDKINNNLFFQKLYKYYFDNLNNSNHIRGTIIYGYNNENNNDIIFDDINNEYIFLKNPEKNYFLFKYKPRQTLLNQLYPWAYMAGMAAKKPLHSIHIENWLDKDIDIFRKTYNIIPLPDHLNLMSGIN</sequence>
<dbReference type="EC" id="4.1.1.130" evidence="1"/>
<dbReference type="EMBL" id="AABL01001871">
    <property type="protein sequence ID" value="EAA17838.1"/>
    <property type="molecule type" value="Genomic_DNA"/>
</dbReference>
<dbReference type="STRING" id="73239.Q7RCL6"/>
<dbReference type="PaxDb" id="73239-Q7RCL6"/>
<dbReference type="EnsemblProtists" id="EAA17838">
    <property type="protein sequence ID" value="EAA17838"/>
    <property type="gene ID" value="EAA17838"/>
</dbReference>
<dbReference type="KEGG" id="pyo:PY17X_0937400"/>
<dbReference type="InParanoid" id="Q7RCL6"/>
<dbReference type="UniPathway" id="UPA00232"/>
<dbReference type="Proteomes" id="UP000008553">
    <property type="component" value="Unassembled WGS sequence"/>
</dbReference>
<dbReference type="GO" id="GO:0031314">
    <property type="term" value="C:extrinsic component of mitochondrial inner membrane"/>
    <property type="evidence" value="ECO:0007669"/>
    <property type="project" value="UniProtKB-UniRule"/>
</dbReference>
<dbReference type="GO" id="GO:0006744">
    <property type="term" value="P:ubiquinone biosynthetic process"/>
    <property type="evidence" value="ECO:0007669"/>
    <property type="project" value="UniProtKB-UniRule"/>
</dbReference>
<dbReference type="HAMAP" id="MF_03111">
    <property type="entry name" value="Coq4"/>
    <property type="match status" value="1"/>
</dbReference>
<dbReference type="InterPro" id="IPR007715">
    <property type="entry name" value="Coq4"/>
</dbReference>
<dbReference type="InterPro" id="IPR027540">
    <property type="entry name" value="Coq4_euk"/>
</dbReference>
<dbReference type="PANTHER" id="PTHR12922">
    <property type="entry name" value="UBIQUINONE BIOSYNTHESIS PROTEIN"/>
    <property type="match status" value="1"/>
</dbReference>
<dbReference type="PANTHER" id="PTHR12922:SF7">
    <property type="entry name" value="UBIQUINONE BIOSYNTHESIS PROTEIN COQ4 HOMOLOG, MITOCHONDRIAL"/>
    <property type="match status" value="1"/>
</dbReference>
<dbReference type="Pfam" id="PF05019">
    <property type="entry name" value="Coq4"/>
    <property type="match status" value="1"/>
</dbReference>
<protein>
    <recommendedName>
        <fullName evidence="1">Ubiquinone biosynthesis protein COQ4 homolog, mitochondrial</fullName>
    </recommendedName>
    <alternativeName>
        <fullName>4-hydroxy-3-methoxy-5-polyprenylbenzoate decarboxylase</fullName>
        <ecNumber evidence="1">4.1.1.130</ecNumber>
    </alternativeName>
    <alternativeName>
        <fullName evidence="1">Coenzyme Q biosynthesis protein 4 homolog</fullName>
    </alternativeName>
</protein>
<reference key="1">
    <citation type="journal article" date="2002" name="Nature">
        <title>Genome sequence and comparative analysis of the model rodent malaria parasite Plasmodium yoelii yoelii.</title>
        <authorList>
            <person name="Carlton J.M."/>
            <person name="Angiuoli S.V."/>
            <person name="Suh B.B."/>
            <person name="Kooij T.W."/>
            <person name="Pertea M."/>
            <person name="Silva J.C."/>
            <person name="Ermolaeva M.D."/>
            <person name="Allen J.E."/>
            <person name="Selengut J.D."/>
            <person name="Koo H.L."/>
            <person name="Peterson J.D."/>
            <person name="Pop M."/>
            <person name="Kosack D.S."/>
            <person name="Shumway M.F."/>
            <person name="Bidwell S.L."/>
            <person name="Shallom S.J."/>
            <person name="van Aken S.E."/>
            <person name="Riedmuller S.B."/>
            <person name="Feldblyum T.V."/>
            <person name="Cho J.K."/>
            <person name="Quackenbush J."/>
            <person name="Sedegah M."/>
            <person name="Shoaibi A."/>
            <person name="Cummings L.M."/>
            <person name="Florens L."/>
            <person name="Yates J.R. III"/>
            <person name="Raine J.D."/>
            <person name="Sinden R.E."/>
            <person name="Harris M.A."/>
            <person name="Cunningham D.A."/>
            <person name="Preiser P.R."/>
            <person name="Bergman L.W."/>
            <person name="Vaidya A.B."/>
            <person name="van Lin L.H."/>
            <person name="Janse C.J."/>
            <person name="Waters A.P."/>
            <person name="Smith H.O."/>
            <person name="White O.R."/>
            <person name="Salzberg S.L."/>
            <person name="Venter J.C."/>
            <person name="Fraser C.M."/>
            <person name="Hoffman S.L."/>
            <person name="Gardner M.J."/>
            <person name="Carucci D.J."/>
        </authorList>
    </citation>
    <scope>NUCLEOTIDE SEQUENCE [LARGE SCALE GENOMIC DNA]</scope>
    <source>
        <strain>17XNL</strain>
    </source>
</reference>
<organism>
    <name type="scientific">Plasmodium yoelii yoelii</name>
    <dbReference type="NCBI Taxonomy" id="73239"/>
    <lineage>
        <taxon>Eukaryota</taxon>
        <taxon>Sar</taxon>
        <taxon>Alveolata</taxon>
        <taxon>Apicomplexa</taxon>
        <taxon>Aconoidasida</taxon>
        <taxon>Haemosporida</taxon>
        <taxon>Plasmodiidae</taxon>
        <taxon>Plasmodium</taxon>
        <taxon>Plasmodium (Vinckeia)</taxon>
    </lineage>
</organism>
<proteinExistence type="inferred from homology"/>
<feature type="chain" id="PRO_0000388082" description="Ubiquinone biosynthesis protein COQ4 homolog, mitochondrial">
    <location>
        <begin position="1"/>
        <end position="355"/>
    </location>
</feature>
<feature type="binding site" evidence="1">
    <location>
        <position position="134"/>
    </location>
    <ligand>
        <name>Zn(2+)</name>
        <dbReference type="ChEBI" id="CHEBI:29105"/>
    </ligand>
</feature>
<feature type="binding site" evidence="1">
    <location>
        <position position="135"/>
    </location>
    <ligand>
        <name>Zn(2+)</name>
        <dbReference type="ChEBI" id="CHEBI:29105"/>
    </ligand>
</feature>
<feature type="binding site" evidence="1">
    <location>
        <position position="138"/>
    </location>
    <ligand>
        <name>Zn(2+)</name>
        <dbReference type="ChEBI" id="CHEBI:29105"/>
    </ligand>
</feature>
<feature type="binding site" evidence="1">
    <location>
        <position position="150"/>
    </location>
    <ligand>
        <name>Zn(2+)</name>
        <dbReference type="ChEBI" id="CHEBI:29105"/>
    </ligand>
</feature>
<gene>
    <name type="ORF">PY05764</name>
</gene>